<keyword id="KW-0238">DNA-binding</keyword>
<keyword id="KW-0479">Metal-binding</keyword>
<keyword id="KW-0539">Nucleus</keyword>
<keyword id="KW-1185">Reference proteome</keyword>
<keyword id="KW-0677">Repeat</keyword>
<keyword id="KW-0804">Transcription</keyword>
<keyword id="KW-0805">Transcription regulation</keyword>
<keyword id="KW-0862">Zinc</keyword>
<keyword id="KW-0863">Zinc-finger</keyword>
<dbReference type="EMBL" id="AB050507">
    <property type="protein sequence ID" value="BAB17275.1"/>
    <property type="molecule type" value="mRNA"/>
</dbReference>
<dbReference type="RefSeq" id="NP_001273075.1">
    <property type="nucleotide sequence ID" value="NM_001286146.1"/>
</dbReference>
<dbReference type="SMR" id="Q9GM03"/>
<dbReference type="STRING" id="9541.ENSMFAP00000027671"/>
<dbReference type="eggNOG" id="KOG1721">
    <property type="taxonomic scope" value="Eukaryota"/>
</dbReference>
<dbReference type="Proteomes" id="UP000233100">
    <property type="component" value="Unplaced"/>
</dbReference>
<dbReference type="GO" id="GO:0005634">
    <property type="term" value="C:nucleus"/>
    <property type="evidence" value="ECO:0007669"/>
    <property type="project" value="UniProtKB-SubCell"/>
</dbReference>
<dbReference type="GO" id="GO:0000981">
    <property type="term" value="F:DNA-binding transcription factor activity, RNA polymerase II-specific"/>
    <property type="evidence" value="ECO:0007669"/>
    <property type="project" value="TreeGrafter"/>
</dbReference>
<dbReference type="GO" id="GO:0000978">
    <property type="term" value="F:RNA polymerase II cis-regulatory region sequence-specific DNA binding"/>
    <property type="evidence" value="ECO:0007669"/>
    <property type="project" value="TreeGrafter"/>
</dbReference>
<dbReference type="GO" id="GO:0008270">
    <property type="term" value="F:zinc ion binding"/>
    <property type="evidence" value="ECO:0007669"/>
    <property type="project" value="UniProtKB-KW"/>
</dbReference>
<dbReference type="FunFam" id="3.30.160.60:FF:000100">
    <property type="entry name" value="Zinc finger 45-like"/>
    <property type="match status" value="1"/>
</dbReference>
<dbReference type="FunFam" id="3.30.160.60:FF:000565">
    <property type="entry name" value="Zinc finger protein 575"/>
    <property type="match status" value="3"/>
</dbReference>
<dbReference type="Gene3D" id="3.30.160.60">
    <property type="entry name" value="Classic Zinc Finger"/>
    <property type="match status" value="5"/>
</dbReference>
<dbReference type="InterPro" id="IPR036236">
    <property type="entry name" value="Znf_C2H2_sf"/>
</dbReference>
<dbReference type="InterPro" id="IPR013087">
    <property type="entry name" value="Znf_C2H2_type"/>
</dbReference>
<dbReference type="PANTHER" id="PTHR23226">
    <property type="entry name" value="ZINC FINGER AND SCAN DOMAIN-CONTAINING"/>
    <property type="match status" value="1"/>
</dbReference>
<dbReference type="PANTHER" id="PTHR23226:SF206">
    <property type="entry name" value="ZINC FINGER PROTEIN 575"/>
    <property type="match status" value="1"/>
</dbReference>
<dbReference type="Pfam" id="PF00096">
    <property type="entry name" value="zf-C2H2"/>
    <property type="match status" value="6"/>
</dbReference>
<dbReference type="SMART" id="SM00355">
    <property type="entry name" value="ZnF_C2H2"/>
    <property type="match status" value="6"/>
</dbReference>
<dbReference type="SUPFAM" id="SSF57667">
    <property type="entry name" value="beta-beta-alpha zinc fingers"/>
    <property type="match status" value="3"/>
</dbReference>
<dbReference type="PROSITE" id="PS00028">
    <property type="entry name" value="ZINC_FINGER_C2H2_1"/>
    <property type="match status" value="6"/>
</dbReference>
<dbReference type="PROSITE" id="PS50157">
    <property type="entry name" value="ZINC_FINGER_C2H2_2"/>
    <property type="match status" value="6"/>
</dbReference>
<sequence>MMLEVPRYTWRSPSNIKVVAEPGLGPGRWLLPGAHQPSCPPAPHQGPLQKPSQSAPGPTASASAPPRPRRRPPPQRPHRCPDCDKAFSYPSKLATHRLAHGGARPHPCPDCPKAFSYPSKLAAHRLTHSGARPHPCPHCPKAFGHRSKLAAHLWTHAPTRPYPCPDCPKSFCYPSKLAAHRHTHHATDARPYPCPHCPKAFSFPSKLAAHRLCHDPPTAPGSQATARHRCSSCGQAFGQRRLLLLHQRSHHQVEHKGERD</sequence>
<protein>
    <recommendedName>
        <fullName>Zinc finger protein 575</fullName>
    </recommendedName>
</protein>
<name>ZN575_MACFA</name>
<evidence type="ECO:0000255" key="1">
    <source>
        <dbReference type="PROSITE-ProRule" id="PRU00042"/>
    </source>
</evidence>
<evidence type="ECO:0000256" key="2">
    <source>
        <dbReference type="SAM" id="MobiDB-lite"/>
    </source>
</evidence>
<evidence type="ECO:0000305" key="3"/>
<comment type="function">
    <text>May be involved in transcriptional regulation.</text>
</comment>
<comment type="subcellular location">
    <subcellularLocation>
        <location evidence="3">Nucleus</location>
    </subcellularLocation>
</comment>
<comment type="similarity">
    <text evidence="3">Belongs to the krueppel C2H2-type zinc-finger protein family.</text>
</comment>
<organism>
    <name type="scientific">Macaca fascicularis</name>
    <name type="common">Crab-eating macaque</name>
    <name type="synonym">Cynomolgus monkey</name>
    <dbReference type="NCBI Taxonomy" id="9541"/>
    <lineage>
        <taxon>Eukaryota</taxon>
        <taxon>Metazoa</taxon>
        <taxon>Chordata</taxon>
        <taxon>Craniata</taxon>
        <taxon>Vertebrata</taxon>
        <taxon>Euteleostomi</taxon>
        <taxon>Mammalia</taxon>
        <taxon>Eutheria</taxon>
        <taxon>Euarchontoglires</taxon>
        <taxon>Primates</taxon>
        <taxon>Haplorrhini</taxon>
        <taxon>Catarrhini</taxon>
        <taxon>Cercopithecidae</taxon>
        <taxon>Cercopithecinae</taxon>
        <taxon>Macaca</taxon>
    </lineage>
</organism>
<proteinExistence type="evidence at transcript level"/>
<gene>
    <name type="primary">ZNF575</name>
    <name type="ORF">QnpA-10990</name>
</gene>
<feature type="chain" id="PRO_0000047665" description="Zinc finger protein 575">
    <location>
        <begin position="1"/>
        <end position="260"/>
    </location>
</feature>
<feature type="zinc finger region" description="C2H2-type 1" evidence="1">
    <location>
        <begin position="78"/>
        <end position="100"/>
    </location>
</feature>
<feature type="zinc finger region" description="C2H2-type 2" evidence="1">
    <location>
        <begin position="106"/>
        <end position="128"/>
    </location>
</feature>
<feature type="zinc finger region" description="C2H2-type 3" evidence="1">
    <location>
        <begin position="134"/>
        <end position="156"/>
    </location>
</feature>
<feature type="zinc finger region" description="C2H2-type 4" evidence="1">
    <location>
        <begin position="162"/>
        <end position="184"/>
    </location>
</feature>
<feature type="zinc finger region" description="C2H2-type 5" evidence="1">
    <location>
        <begin position="192"/>
        <end position="214"/>
    </location>
</feature>
<feature type="zinc finger region" description="C2H2-type 6" evidence="1">
    <location>
        <begin position="228"/>
        <end position="255"/>
    </location>
</feature>
<feature type="region of interest" description="Disordered" evidence="2">
    <location>
        <begin position="22"/>
        <end position="81"/>
    </location>
</feature>
<feature type="compositionally biased region" description="Low complexity" evidence="2">
    <location>
        <begin position="51"/>
        <end position="64"/>
    </location>
</feature>
<feature type="compositionally biased region" description="Basic residues" evidence="2">
    <location>
        <begin position="67"/>
        <end position="78"/>
    </location>
</feature>
<accession>Q9GM03</accession>
<reference key="1">
    <citation type="journal article" date="2001" name="Gene">
        <title>Assignment of 118 novel cDNAs of cynomolgus monkey brain to human chromosomes.</title>
        <authorList>
            <person name="Osada N."/>
            <person name="Hida M."/>
            <person name="Kususda J."/>
            <person name="Tanuma R."/>
            <person name="Iseki K."/>
            <person name="Hirata M."/>
            <person name="Suto Y."/>
            <person name="Hirai M."/>
            <person name="Terao K."/>
            <person name="Suzuki Y."/>
            <person name="Sugano S."/>
            <person name="Hashimoto K."/>
        </authorList>
    </citation>
    <scope>NUCLEOTIDE SEQUENCE [LARGE SCALE MRNA]</scope>
    <source>
        <tissue>Parietal cortex</tissue>
    </source>
</reference>
<reference key="2">
    <citation type="journal article" date="2001" name="Gene">
        <authorList>
            <person name="Osada N."/>
            <person name="Hida M."/>
            <person name="Kusuda J."/>
            <person name="Tanuma R."/>
            <person name="Iseki K."/>
            <person name="Hirata M."/>
            <person name="Suto Y."/>
            <person name="Hirai M."/>
            <person name="Terao K."/>
            <person name="Suzuki Y."/>
            <person name="Sugano S."/>
            <person name="Hashimoto K."/>
            <person name="Kususda J."/>
        </authorList>
    </citation>
    <scope>ERRATUM OF PUBMED:11574149</scope>
</reference>